<proteinExistence type="inferred from homology"/>
<evidence type="ECO:0000255" key="1">
    <source>
        <dbReference type="HAMAP-Rule" id="MF_00696"/>
    </source>
</evidence>
<feature type="chain" id="PRO_1000132326" description="Fatty acid metabolism regulator protein">
    <location>
        <begin position="1"/>
        <end position="239"/>
    </location>
</feature>
<feature type="domain" description="HTH gntR-type" evidence="1">
    <location>
        <begin position="6"/>
        <end position="74"/>
    </location>
</feature>
<feature type="DNA-binding region" description="H-T-H motif" evidence="1">
    <location>
        <begin position="34"/>
        <end position="53"/>
    </location>
</feature>
<gene>
    <name evidence="1" type="primary">fadR</name>
    <name type="ordered locus">SEN1232</name>
</gene>
<organism>
    <name type="scientific">Salmonella enteritidis PT4 (strain P125109)</name>
    <dbReference type="NCBI Taxonomy" id="550537"/>
    <lineage>
        <taxon>Bacteria</taxon>
        <taxon>Pseudomonadati</taxon>
        <taxon>Pseudomonadota</taxon>
        <taxon>Gammaproteobacteria</taxon>
        <taxon>Enterobacterales</taxon>
        <taxon>Enterobacteriaceae</taxon>
        <taxon>Salmonella</taxon>
    </lineage>
</organism>
<name>FADR_SALEP</name>
<keyword id="KW-0010">Activator</keyword>
<keyword id="KW-0963">Cytoplasm</keyword>
<keyword id="KW-0238">DNA-binding</keyword>
<keyword id="KW-0276">Fatty acid metabolism</keyword>
<keyword id="KW-0443">Lipid metabolism</keyword>
<keyword id="KW-0678">Repressor</keyword>
<keyword id="KW-0804">Transcription</keyword>
<keyword id="KW-0805">Transcription regulation</keyword>
<reference key="1">
    <citation type="journal article" date="2008" name="Genome Res.">
        <title>Comparative genome analysis of Salmonella enteritidis PT4 and Salmonella gallinarum 287/91 provides insights into evolutionary and host adaptation pathways.</title>
        <authorList>
            <person name="Thomson N.R."/>
            <person name="Clayton D.J."/>
            <person name="Windhorst D."/>
            <person name="Vernikos G."/>
            <person name="Davidson S."/>
            <person name="Churcher C."/>
            <person name="Quail M.A."/>
            <person name="Stevens M."/>
            <person name="Jones M.A."/>
            <person name="Watson M."/>
            <person name="Barron A."/>
            <person name="Layton A."/>
            <person name="Pickard D."/>
            <person name="Kingsley R.A."/>
            <person name="Bignell A."/>
            <person name="Clark L."/>
            <person name="Harris B."/>
            <person name="Ormond D."/>
            <person name="Abdellah Z."/>
            <person name="Brooks K."/>
            <person name="Cherevach I."/>
            <person name="Chillingworth T."/>
            <person name="Woodward J."/>
            <person name="Norberczak H."/>
            <person name="Lord A."/>
            <person name="Arrowsmith C."/>
            <person name="Jagels K."/>
            <person name="Moule S."/>
            <person name="Mungall K."/>
            <person name="Saunders M."/>
            <person name="Whitehead S."/>
            <person name="Chabalgoity J.A."/>
            <person name="Maskell D."/>
            <person name="Humphreys T."/>
            <person name="Roberts M."/>
            <person name="Barrow P.A."/>
            <person name="Dougan G."/>
            <person name="Parkhill J."/>
        </authorList>
    </citation>
    <scope>NUCLEOTIDE SEQUENCE [LARGE SCALE GENOMIC DNA]</scope>
    <source>
        <strain>P125109</strain>
    </source>
</reference>
<dbReference type="EMBL" id="AM933172">
    <property type="protein sequence ID" value="CAR32812.1"/>
    <property type="molecule type" value="Genomic_DNA"/>
</dbReference>
<dbReference type="RefSeq" id="WP_000234826.1">
    <property type="nucleotide sequence ID" value="NC_011294.1"/>
</dbReference>
<dbReference type="SMR" id="B5R2W5"/>
<dbReference type="KEGG" id="set:SEN1232"/>
<dbReference type="HOGENOM" id="CLU_017584_9_4_6"/>
<dbReference type="Proteomes" id="UP000000613">
    <property type="component" value="Chromosome"/>
</dbReference>
<dbReference type="GO" id="GO:0005737">
    <property type="term" value="C:cytoplasm"/>
    <property type="evidence" value="ECO:0007669"/>
    <property type="project" value="UniProtKB-SubCell"/>
</dbReference>
<dbReference type="GO" id="GO:0003677">
    <property type="term" value="F:DNA binding"/>
    <property type="evidence" value="ECO:0007669"/>
    <property type="project" value="UniProtKB-KW"/>
</dbReference>
<dbReference type="GO" id="GO:0003700">
    <property type="term" value="F:DNA-binding transcription factor activity"/>
    <property type="evidence" value="ECO:0007669"/>
    <property type="project" value="UniProtKB-UniRule"/>
</dbReference>
<dbReference type="GO" id="GO:0000062">
    <property type="term" value="F:fatty-acyl-CoA binding"/>
    <property type="evidence" value="ECO:0007669"/>
    <property type="project" value="InterPro"/>
</dbReference>
<dbReference type="GO" id="GO:0006631">
    <property type="term" value="P:fatty acid metabolic process"/>
    <property type="evidence" value="ECO:0007669"/>
    <property type="project" value="UniProtKB-KW"/>
</dbReference>
<dbReference type="GO" id="GO:0019217">
    <property type="term" value="P:regulation of fatty acid metabolic process"/>
    <property type="evidence" value="ECO:0007669"/>
    <property type="project" value="UniProtKB-UniRule"/>
</dbReference>
<dbReference type="CDD" id="cd07377">
    <property type="entry name" value="WHTH_GntR"/>
    <property type="match status" value="1"/>
</dbReference>
<dbReference type="FunFam" id="1.10.10.10:FF:000036">
    <property type="entry name" value="Fatty acid metabolism regulator protein"/>
    <property type="match status" value="1"/>
</dbReference>
<dbReference type="FunFam" id="1.20.120.530:FF:000003">
    <property type="entry name" value="Fatty acid metabolism regulator protein"/>
    <property type="match status" value="1"/>
</dbReference>
<dbReference type="Gene3D" id="1.20.120.530">
    <property type="entry name" value="GntR ligand-binding domain-like"/>
    <property type="match status" value="1"/>
</dbReference>
<dbReference type="Gene3D" id="1.10.10.10">
    <property type="entry name" value="Winged helix-like DNA-binding domain superfamily/Winged helix DNA-binding domain"/>
    <property type="match status" value="1"/>
</dbReference>
<dbReference type="HAMAP" id="MF_00696">
    <property type="entry name" value="HTH_FadR"/>
    <property type="match status" value="1"/>
</dbReference>
<dbReference type="InterPro" id="IPR014178">
    <property type="entry name" value="FA-response_TF_FadR"/>
</dbReference>
<dbReference type="InterPro" id="IPR028374">
    <property type="entry name" value="FadR_C"/>
</dbReference>
<dbReference type="InterPro" id="IPR008920">
    <property type="entry name" value="TF_FadR/GntR_C"/>
</dbReference>
<dbReference type="InterPro" id="IPR000524">
    <property type="entry name" value="Tscrpt_reg_HTH_GntR"/>
</dbReference>
<dbReference type="InterPro" id="IPR036388">
    <property type="entry name" value="WH-like_DNA-bd_sf"/>
</dbReference>
<dbReference type="InterPro" id="IPR036390">
    <property type="entry name" value="WH_DNA-bd_sf"/>
</dbReference>
<dbReference type="NCBIfam" id="TIGR02812">
    <property type="entry name" value="fadR_gamma"/>
    <property type="match status" value="1"/>
</dbReference>
<dbReference type="NCBIfam" id="NF003444">
    <property type="entry name" value="PRK04984.1"/>
    <property type="match status" value="1"/>
</dbReference>
<dbReference type="PANTHER" id="PTHR43537:SF52">
    <property type="entry name" value="FATTY ACID METABOLISM REGULATOR PROTEIN"/>
    <property type="match status" value="1"/>
</dbReference>
<dbReference type="PANTHER" id="PTHR43537">
    <property type="entry name" value="TRANSCRIPTIONAL REGULATOR, GNTR FAMILY"/>
    <property type="match status" value="1"/>
</dbReference>
<dbReference type="Pfam" id="PF07840">
    <property type="entry name" value="FadR_C"/>
    <property type="match status" value="1"/>
</dbReference>
<dbReference type="Pfam" id="PF00392">
    <property type="entry name" value="GntR"/>
    <property type="match status" value="1"/>
</dbReference>
<dbReference type="PRINTS" id="PR00035">
    <property type="entry name" value="HTHGNTR"/>
</dbReference>
<dbReference type="SMART" id="SM00345">
    <property type="entry name" value="HTH_GNTR"/>
    <property type="match status" value="1"/>
</dbReference>
<dbReference type="SUPFAM" id="SSF48008">
    <property type="entry name" value="GntR ligand-binding domain-like"/>
    <property type="match status" value="1"/>
</dbReference>
<dbReference type="SUPFAM" id="SSF46785">
    <property type="entry name" value="Winged helix' DNA-binding domain"/>
    <property type="match status" value="1"/>
</dbReference>
<dbReference type="PROSITE" id="PS50949">
    <property type="entry name" value="HTH_GNTR"/>
    <property type="match status" value="1"/>
</dbReference>
<sequence>MVIKAQSPAGFAEEYIIESIWNNRFPPGTILPAERELSELIGVTRTTLREVLQRLARDGWLTIQHGKPTKVNNFWETSGLNILETLARLDHESVPQLIDNLLSVRTNISTIFIRTALRQHPDKAQEVLATAHEVADHADAFADLDYNIFRGLAFASGNPIYGLILNGMKGLYTRIGRHYFANPEARSLALGFYHKLSSLCEQGAHDQVYETVRRYGHDSGEIWHRMQKNLPGDLAIQGR</sequence>
<accession>B5R2W5</accession>
<protein>
    <recommendedName>
        <fullName evidence="1">Fatty acid metabolism regulator protein</fullName>
    </recommendedName>
</protein>
<comment type="function">
    <text evidence="1">Multifunctional regulator of fatty acid metabolism.</text>
</comment>
<comment type="subunit">
    <text evidence="1">Homodimer.</text>
</comment>
<comment type="subcellular location">
    <subcellularLocation>
        <location evidence="1">Cytoplasm</location>
    </subcellularLocation>
</comment>